<dbReference type="EC" id="4.3.2.10" evidence="1"/>
<dbReference type="EC" id="3.5.1.2" evidence="1"/>
<dbReference type="EMBL" id="AE014133">
    <property type="protein sequence ID" value="AAN58948.1"/>
    <property type="molecule type" value="Genomic_DNA"/>
</dbReference>
<dbReference type="RefSeq" id="NP_721642.1">
    <property type="nucleotide sequence ID" value="NC_004350.2"/>
</dbReference>
<dbReference type="RefSeq" id="WP_002263178.1">
    <property type="nucleotide sequence ID" value="NC_004350.2"/>
</dbReference>
<dbReference type="SMR" id="Q8DTR1"/>
<dbReference type="STRING" id="210007.SMU_1266"/>
<dbReference type="KEGG" id="smu:SMU_1266"/>
<dbReference type="PATRIC" id="fig|210007.7.peg.1135"/>
<dbReference type="eggNOG" id="COG0118">
    <property type="taxonomic scope" value="Bacteria"/>
</dbReference>
<dbReference type="HOGENOM" id="CLU_071837_2_2_9"/>
<dbReference type="OrthoDB" id="9807137at2"/>
<dbReference type="PhylomeDB" id="Q8DTR1"/>
<dbReference type="UniPathway" id="UPA00031">
    <property type="reaction ID" value="UER00010"/>
</dbReference>
<dbReference type="Proteomes" id="UP000002512">
    <property type="component" value="Chromosome"/>
</dbReference>
<dbReference type="GO" id="GO:0005737">
    <property type="term" value="C:cytoplasm"/>
    <property type="evidence" value="ECO:0007669"/>
    <property type="project" value="UniProtKB-SubCell"/>
</dbReference>
<dbReference type="GO" id="GO:0004359">
    <property type="term" value="F:glutaminase activity"/>
    <property type="evidence" value="ECO:0007669"/>
    <property type="project" value="UniProtKB-EC"/>
</dbReference>
<dbReference type="GO" id="GO:0000107">
    <property type="term" value="F:imidazoleglycerol-phosphate synthase activity"/>
    <property type="evidence" value="ECO:0007669"/>
    <property type="project" value="UniProtKB-UniRule"/>
</dbReference>
<dbReference type="GO" id="GO:0016829">
    <property type="term" value="F:lyase activity"/>
    <property type="evidence" value="ECO:0007669"/>
    <property type="project" value="UniProtKB-KW"/>
</dbReference>
<dbReference type="GO" id="GO:0000105">
    <property type="term" value="P:L-histidine biosynthetic process"/>
    <property type="evidence" value="ECO:0007669"/>
    <property type="project" value="UniProtKB-UniRule"/>
</dbReference>
<dbReference type="CDD" id="cd01748">
    <property type="entry name" value="GATase1_IGP_Synthase"/>
    <property type="match status" value="1"/>
</dbReference>
<dbReference type="Gene3D" id="3.40.50.880">
    <property type="match status" value="1"/>
</dbReference>
<dbReference type="HAMAP" id="MF_00278">
    <property type="entry name" value="HisH"/>
    <property type="match status" value="1"/>
</dbReference>
<dbReference type="InterPro" id="IPR029062">
    <property type="entry name" value="Class_I_gatase-like"/>
</dbReference>
<dbReference type="InterPro" id="IPR017926">
    <property type="entry name" value="GATASE"/>
</dbReference>
<dbReference type="InterPro" id="IPR010139">
    <property type="entry name" value="Imidazole-glycPsynth_HisH"/>
</dbReference>
<dbReference type="NCBIfam" id="TIGR01855">
    <property type="entry name" value="IMP_synth_hisH"/>
    <property type="match status" value="1"/>
</dbReference>
<dbReference type="PANTHER" id="PTHR42701">
    <property type="entry name" value="IMIDAZOLE GLYCEROL PHOSPHATE SYNTHASE SUBUNIT HISH"/>
    <property type="match status" value="1"/>
</dbReference>
<dbReference type="PANTHER" id="PTHR42701:SF1">
    <property type="entry name" value="IMIDAZOLE GLYCEROL PHOSPHATE SYNTHASE SUBUNIT HISH"/>
    <property type="match status" value="1"/>
</dbReference>
<dbReference type="Pfam" id="PF00117">
    <property type="entry name" value="GATase"/>
    <property type="match status" value="1"/>
</dbReference>
<dbReference type="PIRSF" id="PIRSF000495">
    <property type="entry name" value="Amidotransf_hisH"/>
    <property type="match status" value="1"/>
</dbReference>
<dbReference type="SUPFAM" id="SSF52317">
    <property type="entry name" value="Class I glutamine amidotransferase-like"/>
    <property type="match status" value="1"/>
</dbReference>
<dbReference type="PROSITE" id="PS51273">
    <property type="entry name" value="GATASE_TYPE_1"/>
    <property type="match status" value="1"/>
</dbReference>
<gene>
    <name evidence="1" type="primary">hisH</name>
    <name type="ordered locus">SMU_1266</name>
</gene>
<comment type="function">
    <text evidence="1">IGPS catalyzes the conversion of PRFAR and glutamine to IGP, AICAR and glutamate. The HisH subunit catalyzes the hydrolysis of glutamine to glutamate and ammonia as part of the synthesis of IGP and AICAR. The resulting ammonia molecule is channeled to the active site of HisF.</text>
</comment>
<comment type="catalytic activity">
    <reaction evidence="1">
        <text>5-[(5-phospho-1-deoxy-D-ribulos-1-ylimino)methylamino]-1-(5-phospho-beta-D-ribosyl)imidazole-4-carboxamide + L-glutamine = D-erythro-1-(imidazol-4-yl)glycerol 3-phosphate + 5-amino-1-(5-phospho-beta-D-ribosyl)imidazole-4-carboxamide + L-glutamate + H(+)</text>
        <dbReference type="Rhea" id="RHEA:24793"/>
        <dbReference type="ChEBI" id="CHEBI:15378"/>
        <dbReference type="ChEBI" id="CHEBI:29985"/>
        <dbReference type="ChEBI" id="CHEBI:58278"/>
        <dbReference type="ChEBI" id="CHEBI:58359"/>
        <dbReference type="ChEBI" id="CHEBI:58475"/>
        <dbReference type="ChEBI" id="CHEBI:58525"/>
        <dbReference type="EC" id="4.3.2.10"/>
    </reaction>
</comment>
<comment type="catalytic activity">
    <reaction evidence="1">
        <text>L-glutamine + H2O = L-glutamate + NH4(+)</text>
        <dbReference type="Rhea" id="RHEA:15889"/>
        <dbReference type="ChEBI" id="CHEBI:15377"/>
        <dbReference type="ChEBI" id="CHEBI:28938"/>
        <dbReference type="ChEBI" id="CHEBI:29985"/>
        <dbReference type="ChEBI" id="CHEBI:58359"/>
        <dbReference type="EC" id="3.5.1.2"/>
    </reaction>
</comment>
<comment type="pathway">
    <text evidence="1">Amino-acid biosynthesis; L-histidine biosynthesis; L-histidine from 5-phospho-alpha-D-ribose 1-diphosphate: step 5/9.</text>
</comment>
<comment type="subunit">
    <text evidence="1">Heterodimer of HisH and HisF.</text>
</comment>
<comment type="subcellular location">
    <subcellularLocation>
        <location evidence="1">Cytoplasm</location>
    </subcellularLocation>
</comment>
<reference key="1">
    <citation type="journal article" date="2002" name="Proc. Natl. Acad. Sci. U.S.A.">
        <title>Genome sequence of Streptococcus mutans UA159, a cariogenic dental pathogen.</title>
        <authorList>
            <person name="Ajdic D.J."/>
            <person name="McShan W.M."/>
            <person name="McLaughlin R.E."/>
            <person name="Savic G."/>
            <person name="Chang J."/>
            <person name="Carson M.B."/>
            <person name="Primeaux C."/>
            <person name="Tian R."/>
            <person name="Kenton S."/>
            <person name="Jia H.G."/>
            <person name="Lin S.P."/>
            <person name="Qian Y."/>
            <person name="Li S."/>
            <person name="Zhu H."/>
            <person name="Najar F.Z."/>
            <person name="Lai H."/>
            <person name="White J."/>
            <person name="Roe B.A."/>
            <person name="Ferretti J.J."/>
        </authorList>
    </citation>
    <scope>NUCLEOTIDE SEQUENCE [LARGE SCALE GENOMIC DNA]</scope>
    <source>
        <strain>ATCC 700610 / UA159</strain>
    </source>
</reference>
<evidence type="ECO:0000255" key="1">
    <source>
        <dbReference type="HAMAP-Rule" id="MF_00278"/>
    </source>
</evidence>
<protein>
    <recommendedName>
        <fullName evidence="1">Imidazole glycerol phosphate synthase subunit HisH</fullName>
        <ecNumber evidence="1">4.3.2.10</ecNumber>
    </recommendedName>
    <alternativeName>
        <fullName evidence="1">IGP synthase glutaminase subunit</fullName>
        <ecNumber evidence="1">3.5.1.2</ecNumber>
    </alternativeName>
    <alternativeName>
        <fullName evidence="1">IGP synthase subunit HisH</fullName>
    </alternativeName>
    <alternativeName>
        <fullName evidence="1">ImGP synthase subunit HisH</fullName>
        <shortName evidence="1">IGPS subunit HisH</shortName>
    </alternativeName>
</protein>
<accession>Q8DTR1</accession>
<organism>
    <name type="scientific">Streptococcus mutans serotype c (strain ATCC 700610 / UA159)</name>
    <dbReference type="NCBI Taxonomy" id="210007"/>
    <lineage>
        <taxon>Bacteria</taxon>
        <taxon>Bacillati</taxon>
        <taxon>Bacillota</taxon>
        <taxon>Bacilli</taxon>
        <taxon>Lactobacillales</taxon>
        <taxon>Streptococcaceae</taxon>
        <taxon>Streptococcus</taxon>
    </lineage>
</organism>
<proteinExistence type="inferred from homology"/>
<feature type="chain" id="PRO_0000152432" description="Imidazole glycerol phosphate synthase subunit HisH">
    <location>
        <begin position="1"/>
        <end position="201"/>
    </location>
</feature>
<feature type="domain" description="Glutamine amidotransferase type-1" evidence="1">
    <location>
        <begin position="1"/>
        <end position="201"/>
    </location>
</feature>
<feature type="active site" description="Nucleophile" evidence="1">
    <location>
        <position position="79"/>
    </location>
</feature>
<feature type="active site" evidence="1">
    <location>
        <position position="181"/>
    </location>
</feature>
<feature type="active site" evidence="1">
    <location>
        <position position="183"/>
    </location>
</feature>
<keyword id="KW-0028">Amino-acid biosynthesis</keyword>
<keyword id="KW-0963">Cytoplasm</keyword>
<keyword id="KW-0315">Glutamine amidotransferase</keyword>
<keyword id="KW-0368">Histidine biosynthesis</keyword>
<keyword id="KW-0378">Hydrolase</keyword>
<keyword id="KW-0456">Lyase</keyword>
<keyword id="KW-1185">Reference proteome</keyword>
<sequence length="201" mass="21414">MIIVIDYDAGNTANVLRALDKLGVKAELSADPQKIVAASGLILPGVGAFPAAMAELEKRGLVAVIKEAVAKGIPLLGICLGMQLLVEKGLEHCETAGFGFISGICQEISAKAGFPVPHMGWNDLQVKQKSALTAGLQGQAVYFVHSYFTDVPQEYIDVTVDYSIEVPAMIHKDNVYGAQFHPEKSGDVGLGILKKFVDLCD</sequence>
<name>HIS5_STRMU</name>